<comment type="function">
    <text evidence="1">Involved in acetylcholine transport into synaptic vesicles.</text>
</comment>
<comment type="subcellular location">
    <subcellularLocation>
        <location>Membrane</location>
        <topology>Multi-pass membrane protein</topology>
    </subcellularLocation>
</comment>
<comment type="tissue specificity">
    <text evidence="4">High expression in the electric lobe of the brain.</text>
</comment>
<comment type="similarity">
    <text evidence="5">Belongs to the major facilitator superfamily. Vesicular transporter family.</text>
</comment>
<comment type="sequence caution" evidence="5">
    <conflict type="erroneous initiation">
        <sequence resource="EMBL-CDS" id="AAC59647"/>
    </conflict>
</comment>
<dbReference type="EMBL" id="U05591">
    <property type="protein sequence ID" value="AAC59647.1"/>
    <property type="status" value="ALT_INIT"/>
    <property type="molecule type" value="mRNA"/>
</dbReference>
<dbReference type="PIR" id="S43685">
    <property type="entry name" value="S43685"/>
</dbReference>
<dbReference type="SMR" id="Q91498"/>
<dbReference type="GO" id="GO:0030121">
    <property type="term" value="C:AP-1 adaptor complex"/>
    <property type="evidence" value="ECO:0007669"/>
    <property type="project" value="TreeGrafter"/>
</dbReference>
<dbReference type="GO" id="GO:0030122">
    <property type="term" value="C:AP-2 adaptor complex"/>
    <property type="evidence" value="ECO:0007669"/>
    <property type="project" value="TreeGrafter"/>
</dbReference>
<dbReference type="GO" id="GO:0043195">
    <property type="term" value="C:terminal bouton"/>
    <property type="evidence" value="ECO:0007669"/>
    <property type="project" value="TreeGrafter"/>
</dbReference>
<dbReference type="GO" id="GO:0005277">
    <property type="term" value="F:acetylcholine transmembrane transporter activity"/>
    <property type="evidence" value="ECO:0007669"/>
    <property type="project" value="TreeGrafter"/>
</dbReference>
<dbReference type="GO" id="GO:0007268">
    <property type="term" value="P:chemical synaptic transmission"/>
    <property type="evidence" value="ECO:0007669"/>
    <property type="project" value="TreeGrafter"/>
</dbReference>
<dbReference type="CDD" id="cd17383">
    <property type="entry name" value="MFS_SLC18A3_VAChT"/>
    <property type="match status" value="1"/>
</dbReference>
<dbReference type="FunFam" id="1.20.1250.20:FF:000109">
    <property type="entry name" value="Putative vesicular acetylcholine transporter"/>
    <property type="match status" value="1"/>
</dbReference>
<dbReference type="Gene3D" id="1.20.1250.20">
    <property type="entry name" value="MFS general substrate transporter like domains"/>
    <property type="match status" value="1"/>
</dbReference>
<dbReference type="InterPro" id="IPR011701">
    <property type="entry name" value="MFS"/>
</dbReference>
<dbReference type="InterPro" id="IPR020846">
    <property type="entry name" value="MFS_dom"/>
</dbReference>
<dbReference type="InterPro" id="IPR036259">
    <property type="entry name" value="MFS_trans_sf"/>
</dbReference>
<dbReference type="InterPro" id="IPR050930">
    <property type="entry name" value="MFS_Vesicular_Transporter"/>
</dbReference>
<dbReference type="PANTHER" id="PTHR23506">
    <property type="entry name" value="GH10249P"/>
    <property type="match status" value="1"/>
</dbReference>
<dbReference type="PANTHER" id="PTHR23506:SF13">
    <property type="entry name" value="VESICULAR ACETYLCHOLINE TRANSPORTER"/>
    <property type="match status" value="1"/>
</dbReference>
<dbReference type="Pfam" id="PF07690">
    <property type="entry name" value="MFS_1"/>
    <property type="match status" value="1"/>
</dbReference>
<dbReference type="SUPFAM" id="SSF103473">
    <property type="entry name" value="MFS general substrate transporter"/>
    <property type="match status" value="1"/>
</dbReference>
<dbReference type="PROSITE" id="PS50850">
    <property type="entry name" value="MFS"/>
    <property type="match status" value="1"/>
</dbReference>
<evidence type="ECO:0000250" key="1"/>
<evidence type="ECO:0000255" key="2"/>
<evidence type="ECO:0000256" key="3">
    <source>
        <dbReference type="SAM" id="MobiDB-lite"/>
    </source>
</evidence>
<evidence type="ECO:0000269" key="4">
    <source>
    </source>
</evidence>
<evidence type="ECO:0000305" key="5"/>
<keyword id="KW-0325">Glycoprotein</keyword>
<keyword id="KW-0472">Membrane</keyword>
<keyword id="KW-0532">Neurotransmitter transport</keyword>
<keyword id="KW-0812">Transmembrane</keyword>
<keyword id="KW-1133">Transmembrane helix</keyword>
<keyword id="KW-0813">Transport</keyword>
<proteinExistence type="evidence at transcript level"/>
<sequence>MAVGQAKAAMGKISSAIGERSKRISGAMNEPRRKRKILLVIVCIAMLLDNMLYMVIVPIIPNYLETIRTYKLVYITTPSNGTNGSLLNSTQRAVLERNPNANEDIQIGVLFASKAILQLLSNPFTGTFIDRVGYDIPLLIGLTIMFFSTITFAFGESYAILFAARSLQGLGSAFADTSGIAMIADKYTEESERTQALGIALAFISFGSLVAPPFGGVLYQFAGKWVPFLVLSFVCLLDGILLLMVVTPFASRTRVNTLQGTPIYKLMIDPYIAVVAGALTTCNIPLAFLEPTISNWMKKTMNASEWQMGITWLPAFFPHILGVYITVKLAAKYPNYQWLYGAVGLVIIGASSCTIPACRNFEELIIPLCALCFGIALVDTALLPTLAFLVDIRYVSVYGSVYAIADISYSVAYALGPIMAGQIVHDLGFVQLNLGMGLVNILYAPGLLFLRNVCQMKPSLSERNILLEEGPKGLYDTIIMEERKEAKEPHGTSSGNHSVHAVLSDQEGYSE</sequence>
<reference key="1">
    <citation type="journal article" date="1994" name="FEBS Lett.">
        <title>Cloning and expression of the vesamicol binding protein from the marine ray Torpedo. Homology with the putative vesicular acetylcholine transporter UNC-17 from Caenorhabditis elegans.</title>
        <authorList>
            <person name="Varoqui H."/>
            <person name="Diebler M.-F."/>
            <person name="Meunier F.-M."/>
            <person name="Rand J.B."/>
            <person name="Usdin T.B."/>
            <person name="Bonner T.I."/>
            <person name="Eiden L.E."/>
            <person name="Erickson J.D."/>
        </authorList>
    </citation>
    <scope>NUCLEOTIDE SEQUENCE [MRNA]</scope>
    <scope>TISSUE SPECIFICITY</scope>
    <source>
        <tissue>Electric lobe</tissue>
    </source>
</reference>
<feature type="chain" id="PRO_0000127523" description="Vesicular acetylcholine transporter">
    <location>
        <begin position="1"/>
        <end position="511"/>
    </location>
</feature>
<feature type="topological domain" description="Cytoplasmic" evidence="2">
    <location>
        <begin position="1"/>
        <end position="36"/>
    </location>
</feature>
<feature type="transmembrane region" description="Helical" evidence="2">
    <location>
        <begin position="37"/>
        <end position="57"/>
    </location>
</feature>
<feature type="topological domain" description="Lumenal, vesicle" evidence="2">
    <location>
        <begin position="58"/>
        <end position="108"/>
    </location>
</feature>
<feature type="transmembrane region" description="Helical" evidence="2">
    <location>
        <begin position="109"/>
        <end position="129"/>
    </location>
</feature>
<feature type="topological domain" description="Cytoplasmic" evidence="2">
    <location>
        <begin position="130"/>
        <end position="135"/>
    </location>
</feature>
<feature type="transmembrane region" description="Helical" evidence="2">
    <location>
        <begin position="136"/>
        <end position="156"/>
    </location>
</feature>
<feature type="topological domain" description="Lumenal, vesicle" evidence="2">
    <location>
        <begin position="157"/>
        <end position="165"/>
    </location>
</feature>
<feature type="transmembrane region" description="Helical" evidence="2">
    <location>
        <begin position="166"/>
        <end position="186"/>
    </location>
</feature>
<feature type="topological domain" description="Cytoplasmic" evidence="2">
    <location>
        <begin position="187"/>
        <end position="197"/>
    </location>
</feature>
<feature type="transmembrane region" description="Helical" evidence="2">
    <location>
        <begin position="198"/>
        <end position="218"/>
    </location>
</feature>
<feature type="topological domain" description="Lumenal, vesicle" evidence="2">
    <location>
        <begin position="219"/>
        <end position="225"/>
    </location>
</feature>
<feature type="transmembrane region" description="Helical" evidence="2">
    <location>
        <begin position="226"/>
        <end position="246"/>
    </location>
</feature>
<feature type="topological domain" description="Cytoplasmic" evidence="2">
    <location>
        <begin position="247"/>
        <end position="267"/>
    </location>
</feature>
<feature type="transmembrane region" description="Helical" evidence="2">
    <location>
        <begin position="268"/>
        <end position="288"/>
    </location>
</feature>
<feature type="topological domain" description="Lumenal, vesicle" evidence="2">
    <location>
        <begin position="289"/>
        <end position="306"/>
    </location>
</feature>
<feature type="transmembrane region" description="Helical" evidence="2">
    <location>
        <begin position="307"/>
        <end position="327"/>
    </location>
</feature>
<feature type="topological domain" description="Cytoplasmic" evidence="2">
    <location>
        <begin position="328"/>
        <end position="337"/>
    </location>
</feature>
<feature type="transmembrane region" description="Helical" evidence="2">
    <location>
        <begin position="338"/>
        <end position="358"/>
    </location>
</feature>
<feature type="topological domain" description="Lumenal, vesicle" evidence="2">
    <location>
        <begin position="359"/>
        <end position="363"/>
    </location>
</feature>
<feature type="transmembrane region" description="Helical" evidence="2">
    <location>
        <begin position="364"/>
        <end position="384"/>
    </location>
</feature>
<feature type="topological domain" description="Cytoplasmic" evidence="2">
    <location>
        <begin position="385"/>
        <end position="400"/>
    </location>
</feature>
<feature type="transmembrane region" description="Helical" evidence="2">
    <location>
        <begin position="401"/>
        <end position="421"/>
    </location>
</feature>
<feature type="topological domain" description="Lumenal, vesicle" evidence="2">
    <location>
        <begin position="422"/>
        <end position="428"/>
    </location>
</feature>
<feature type="transmembrane region" description="Helical" evidence="2">
    <location>
        <begin position="429"/>
        <end position="449"/>
    </location>
</feature>
<feature type="topological domain" description="Cytoplasmic" evidence="2">
    <location>
        <begin position="450"/>
        <end position="511"/>
    </location>
</feature>
<feature type="region of interest" description="Disordered" evidence="3">
    <location>
        <begin position="485"/>
        <end position="511"/>
    </location>
</feature>
<feature type="glycosylation site" description="N-linked (GlcNAc...) asparagine" evidence="2">
    <location>
        <position position="80"/>
    </location>
</feature>
<feature type="glycosylation site" description="N-linked (GlcNAc...) asparagine" evidence="2">
    <location>
        <position position="83"/>
    </location>
</feature>
<feature type="glycosylation site" description="N-linked (GlcNAc...) asparagine" evidence="2">
    <location>
        <position position="88"/>
    </location>
</feature>
<feature type="glycosylation site" description="N-linked (GlcNAc...) asparagine" evidence="2">
    <location>
        <position position="302"/>
    </location>
</feature>
<accession>Q91498</accession>
<protein>
    <recommendedName>
        <fullName>Vesicular acetylcholine transporter</fullName>
        <shortName>VAChT</shortName>
    </recommendedName>
    <alternativeName>
        <fullName>Vesamicol-binding protein</fullName>
    </alternativeName>
</protein>
<organism>
    <name type="scientific">Torpedo marmorata</name>
    <name type="common">Marbled electric ray</name>
    <dbReference type="NCBI Taxonomy" id="7788"/>
    <lineage>
        <taxon>Eukaryota</taxon>
        <taxon>Metazoa</taxon>
        <taxon>Chordata</taxon>
        <taxon>Craniata</taxon>
        <taxon>Vertebrata</taxon>
        <taxon>Chondrichthyes</taxon>
        <taxon>Elasmobranchii</taxon>
        <taxon>Batoidea</taxon>
        <taxon>Torpediniformes</taxon>
        <taxon>Torpedinidae</taxon>
        <taxon>Torpedo</taxon>
    </lineage>
</organism>
<name>VACHT_TORMA</name>